<protein>
    <recommendedName>
        <fullName evidence="1">Large ribosomal subunit protein bL31</fullName>
    </recommendedName>
    <alternativeName>
        <fullName evidence="2">50S ribosomal protein L31</fullName>
    </alternativeName>
</protein>
<name>RL31_RHILW</name>
<accession>B5ZPA7</accession>
<reference key="1">
    <citation type="journal article" date="2010" name="Stand. Genomic Sci.">
        <title>Complete genome sequence of Rhizobium leguminosarum bv trifolii strain WSM2304, an effective microsymbiont of the South American clover Trifolium polymorphum.</title>
        <authorList>
            <person name="Reeve W."/>
            <person name="O'Hara G."/>
            <person name="Chain P."/>
            <person name="Ardley J."/>
            <person name="Brau L."/>
            <person name="Nandesena K."/>
            <person name="Tiwari R."/>
            <person name="Malfatti S."/>
            <person name="Kiss H."/>
            <person name="Lapidus A."/>
            <person name="Copeland A."/>
            <person name="Nolan M."/>
            <person name="Land M."/>
            <person name="Ivanova N."/>
            <person name="Mavromatis K."/>
            <person name="Markowitz V."/>
            <person name="Kyrpides N."/>
            <person name="Melino V."/>
            <person name="Denton M."/>
            <person name="Yates R."/>
            <person name="Howieson J."/>
        </authorList>
    </citation>
    <scope>NUCLEOTIDE SEQUENCE [LARGE SCALE GENOMIC DNA]</scope>
    <source>
        <strain>WSM2304</strain>
    </source>
</reference>
<sequence>MKAGIHPDYHMIKVVMTDGTEYETRSTWGSEGAVMNLEIDSKSHPAWTGGNQQLMDRGGRVSKFNKRFGGLGL</sequence>
<feature type="chain" id="PRO_1000126706" description="Large ribosomal subunit protein bL31">
    <location>
        <begin position="1"/>
        <end position="73"/>
    </location>
</feature>
<keyword id="KW-1185">Reference proteome</keyword>
<keyword id="KW-0687">Ribonucleoprotein</keyword>
<keyword id="KW-0689">Ribosomal protein</keyword>
<keyword id="KW-0694">RNA-binding</keyword>
<keyword id="KW-0699">rRNA-binding</keyword>
<comment type="function">
    <text evidence="1">Binds the 23S rRNA.</text>
</comment>
<comment type="subunit">
    <text evidence="1">Part of the 50S ribosomal subunit.</text>
</comment>
<comment type="similarity">
    <text evidence="1">Belongs to the bacterial ribosomal protein bL31 family. Type A subfamily.</text>
</comment>
<organism>
    <name type="scientific">Rhizobium leguminosarum bv. trifolii (strain WSM2304)</name>
    <dbReference type="NCBI Taxonomy" id="395492"/>
    <lineage>
        <taxon>Bacteria</taxon>
        <taxon>Pseudomonadati</taxon>
        <taxon>Pseudomonadota</taxon>
        <taxon>Alphaproteobacteria</taxon>
        <taxon>Hyphomicrobiales</taxon>
        <taxon>Rhizobiaceae</taxon>
        <taxon>Rhizobium/Agrobacterium group</taxon>
        <taxon>Rhizobium</taxon>
    </lineage>
</organism>
<evidence type="ECO:0000255" key="1">
    <source>
        <dbReference type="HAMAP-Rule" id="MF_00501"/>
    </source>
</evidence>
<evidence type="ECO:0000305" key="2"/>
<proteinExistence type="inferred from homology"/>
<gene>
    <name evidence="1" type="primary">rpmE</name>
    <name type="ordered locus">Rleg2_3248</name>
</gene>
<dbReference type="EMBL" id="CP001191">
    <property type="protein sequence ID" value="ACI56515.1"/>
    <property type="molecule type" value="Genomic_DNA"/>
</dbReference>
<dbReference type="RefSeq" id="WP_003566413.1">
    <property type="nucleotide sequence ID" value="NC_011369.1"/>
</dbReference>
<dbReference type="SMR" id="B5ZPA7"/>
<dbReference type="STRING" id="395492.Rleg2_3248"/>
<dbReference type="GeneID" id="91150111"/>
<dbReference type="KEGG" id="rlt:Rleg2_3248"/>
<dbReference type="eggNOG" id="COG0254">
    <property type="taxonomic scope" value="Bacteria"/>
</dbReference>
<dbReference type="HOGENOM" id="CLU_114306_3_2_5"/>
<dbReference type="Proteomes" id="UP000008330">
    <property type="component" value="Chromosome"/>
</dbReference>
<dbReference type="GO" id="GO:1990904">
    <property type="term" value="C:ribonucleoprotein complex"/>
    <property type="evidence" value="ECO:0007669"/>
    <property type="project" value="UniProtKB-KW"/>
</dbReference>
<dbReference type="GO" id="GO:0005840">
    <property type="term" value="C:ribosome"/>
    <property type="evidence" value="ECO:0007669"/>
    <property type="project" value="UniProtKB-KW"/>
</dbReference>
<dbReference type="GO" id="GO:0019843">
    <property type="term" value="F:rRNA binding"/>
    <property type="evidence" value="ECO:0007669"/>
    <property type="project" value="UniProtKB-KW"/>
</dbReference>
<dbReference type="GO" id="GO:0003735">
    <property type="term" value="F:structural constituent of ribosome"/>
    <property type="evidence" value="ECO:0007669"/>
    <property type="project" value="InterPro"/>
</dbReference>
<dbReference type="GO" id="GO:0006412">
    <property type="term" value="P:translation"/>
    <property type="evidence" value="ECO:0007669"/>
    <property type="project" value="UniProtKB-UniRule"/>
</dbReference>
<dbReference type="Gene3D" id="4.10.830.30">
    <property type="entry name" value="Ribosomal protein L31"/>
    <property type="match status" value="1"/>
</dbReference>
<dbReference type="HAMAP" id="MF_00501">
    <property type="entry name" value="Ribosomal_bL31_1"/>
    <property type="match status" value="1"/>
</dbReference>
<dbReference type="InterPro" id="IPR034704">
    <property type="entry name" value="Ribosomal_bL28/bL31-like_sf"/>
</dbReference>
<dbReference type="InterPro" id="IPR002150">
    <property type="entry name" value="Ribosomal_bL31"/>
</dbReference>
<dbReference type="InterPro" id="IPR027491">
    <property type="entry name" value="Ribosomal_bL31_A"/>
</dbReference>
<dbReference type="InterPro" id="IPR042105">
    <property type="entry name" value="Ribosomal_bL31_sf"/>
</dbReference>
<dbReference type="NCBIfam" id="TIGR00105">
    <property type="entry name" value="L31"/>
    <property type="match status" value="1"/>
</dbReference>
<dbReference type="NCBIfam" id="NF001809">
    <property type="entry name" value="PRK00528.1"/>
    <property type="match status" value="1"/>
</dbReference>
<dbReference type="PANTHER" id="PTHR33280">
    <property type="entry name" value="50S RIBOSOMAL PROTEIN L31, CHLOROPLASTIC"/>
    <property type="match status" value="1"/>
</dbReference>
<dbReference type="PANTHER" id="PTHR33280:SF6">
    <property type="entry name" value="LARGE RIBOSOMAL SUBUNIT PROTEIN BL31A"/>
    <property type="match status" value="1"/>
</dbReference>
<dbReference type="Pfam" id="PF01197">
    <property type="entry name" value="Ribosomal_L31"/>
    <property type="match status" value="1"/>
</dbReference>
<dbReference type="PRINTS" id="PR01249">
    <property type="entry name" value="RIBOSOMALL31"/>
</dbReference>
<dbReference type="SUPFAM" id="SSF143800">
    <property type="entry name" value="L28p-like"/>
    <property type="match status" value="1"/>
</dbReference>
<dbReference type="PROSITE" id="PS01143">
    <property type="entry name" value="RIBOSOMAL_L31"/>
    <property type="match status" value="1"/>
</dbReference>